<name>PSAF_FLATR</name>
<proteinExistence type="evidence at transcript level"/>
<feature type="transit peptide" description="Chloroplast" evidence="1">
    <location>
        <begin position="1"/>
        <end position="78"/>
    </location>
</feature>
<feature type="chain" id="PRO_0000029344" description="Photosystem I reaction center subunit III, chloroplastic">
    <location>
        <begin position="79"/>
        <end position="232"/>
    </location>
</feature>
<accession>P46486</accession>
<sequence>MSFTISTSFLQPLEISNLKSSPITSKSKVTSTSIVCSGSTDEKINNADGKSSLKALSAALALSSILVSSTVPALPASADISGLTPCKESKQFAKREKQSLKKLESSLKLYAPDSAPALAIKATMEKTKRRFDNYGKQGLLCGSDGLPHLIVSGDQRHWGEFITPGILFLYIAGWIGWVGRSYLIAIRDEKKPTQKEIIIDVPLATKLLFRGFSWPVAAYREYLNGELIDPTV</sequence>
<protein>
    <recommendedName>
        <fullName>Photosystem I reaction center subunit III, chloroplastic</fullName>
    </recommendedName>
    <alternativeName>
        <fullName>Light-harvesting complex I 17 kDa protein</fullName>
    </alternativeName>
    <alternativeName>
        <fullName>PSI-F</fullName>
    </alternativeName>
</protein>
<evidence type="ECO:0000255" key="1"/>
<evidence type="ECO:0000305" key="2"/>
<dbReference type="EMBL" id="M83119">
    <property type="protein sequence ID" value="AAA33344.1"/>
    <property type="molecule type" value="mRNA"/>
</dbReference>
<dbReference type="PIR" id="S31165">
    <property type="entry name" value="S31165"/>
</dbReference>
<dbReference type="SMR" id="P46486"/>
<dbReference type="GO" id="GO:0009543">
    <property type="term" value="C:chloroplast thylakoid lumen"/>
    <property type="evidence" value="ECO:0007669"/>
    <property type="project" value="UniProtKB-SubCell"/>
</dbReference>
<dbReference type="GO" id="GO:0009535">
    <property type="term" value="C:chloroplast thylakoid membrane"/>
    <property type="evidence" value="ECO:0007669"/>
    <property type="project" value="TreeGrafter"/>
</dbReference>
<dbReference type="GO" id="GO:0009538">
    <property type="term" value="C:photosystem I reaction center"/>
    <property type="evidence" value="ECO:0007669"/>
    <property type="project" value="InterPro"/>
</dbReference>
<dbReference type="GO" id="GO:0015979">
    <property type="term" value="P:photosynthesis"/>
    <property type="evidence" value="ECO:0007669"/>
    <property type="project" value="UniProtKB-KW"/>
</dbReference>
<dbReference type="FunFam" id="1.10.8.110:FF:000001">
    <property type="entry name" value="Photosystem I reaction center subunit III"/>
    <property type="match status" value="1"/>
</dbReference>
<dbReference type="Gene3D" id="1.10.8.110">
    <property type="entry name" value="Photosystem I PsaF, reaction centre subunit III"/>
    <property type="match status" value="1"/>
</dbReference>
<dbReference type="InterPro" id="IPR003666">
    <property type="entry name" value="PSI_PsaF"/>
</dbReference>
<dbReference type="InterPro" id="IPR036577">
    <property type="entry name" value="PSI_PsaF_sf"/>
</dbReference>
<dbReference type="PANTHER" id="PTHR34939">
    <property type="entry name" value="PHOTOSYSTEM I REACTION CENTER SUBUNIT III, CHLOROPLASTIC"/>
    <property type="match status" value="1"/>
</dbReference>
<dbReference type="PANTHER" id="PTHR34939:SF1">
    <property type="entry name" value="PHOTOSYSTEM I REACTION CENTER SUBUNIT III, CHLOROPLASTIC"/>
    <property type="match status" value="1"/>
</dbReference>
<dbReference type="Pfam" id="PF02507">
    <property type="entry name" value="PSI_PsaF"/>
    <property type="match status" value="1"/>
</dbReference>
<dbReference type="SUPFAM" id="SSF81536">
    <property type="entry name" value="Subunit III of photosystem I reaction centre, PsaF"/>
    <property type="match status" value="1"/>
</dbReference>
<comment type="function">
    <text>Probably participates in efficiency of electron transfer from plastocyanin to P700 (or cytochrome c553 in algae and cyanobacteria). This plastocyanin-docking protein contributes to the specific association of plastocyanin to PSI.</text>
</comment>
<comment type="subcellular location">
    <subcellularLocation>
        <location>Plastid</location>
        <location>Chloroplast thylakoid lumen</location>
    </subcellularLocation>
</comment>
<comment type="similarity">
    <text evidence="2">Belongs to the PsaF family.</text>
</comment>
<gene>
    <name type="primary">PSAF</name>
</gene>
<organism>
    <name type="scientific">Flaveria trinervia</name>
    <name type="common">Clustered yellowtops</name>
    <name type="synonym">Oedera trinervia</name>
    <dbReference type="NCBI Taxonomy" id="4227"/>
    <lineage>
        <taxon>Eukaryota</taxon>
        <taxon>Viridiplantae</taxon>
        <taxon>Streptophyta</taxon>
        <taxon>Embryophyta</taxon>
        <taxon>Tracheophyta</taxon>
        <taxon>Spermatophyta</taxon>
        <taxon>Magnoliopsida</taxon>
        <taxon>eudicotyledons</taxon>
        <taxon>Gunneridae</taxon>
        <taxon>Pentapetalae</taxon>
        <taxon>asterids</taxon>
        <taxon>campanulids</taxon>
        <taxon>Asterales</taxon>
        <taxon>Asteraceae</taxon>
        <taxon>Asteroideae</taxon>
        <taxon>Heliantheae alliance</taxon>
        <taxon>Tageteae</taxon>
        <taxon>Flaveria</taxon>
    </lineage>
</organism>
<reference key="1">
    <citation type="journal article" date="1993" name="Plant Mol. Biol.">
        <title>Subunit III (Psa-F) of photosystem I reaction center of the C4 dicotyledon Flaveria trinervia.</title>
        <authorList>
            <person name="Lotan O."/>
            <person name="Streubel M."/>
            <person name="Westhoff P."/>
            <person name="Nechushtai R."/>
        </authorList>
    </citation>
    <scope>NUCLEOTIDE SEQUENCE [MRNA]</scope>
</reference>
<keyword id="KW-0150">Chloroplast</keyword>
<keyword id="KW-0602">Photosynthesis</keyword>
<keyword id="KW-0603">Photosystem I</keyword>
<keyword id="KW-0934">Plastid</keyword>
<keyword id="KW-0793">Thylakoid</keyword>
<keyword id="KW-0809">Transit peptide</keyword>